<proteinExistence type="inferred from homology"/>
<sequence length="203" mass="22481">MKKMAIACALLSSVVASSVWADAASSLKSRLDKVSSFHATFTQKVTDGSGAAVQEGQGDLWVKRPNLFNWHMTQPDESILVSDGKTLWFYNPFVEQATATWLKDATGNTPFMLIARNQASDWQQYNIKQDGDNFVLTPKASNGNLKQFTINVGRDGTIHQFSAVEQDDQRSAYQLKSQQNGAVDPSKFTFTPPQGVTIDDQRK</sequence>
<protein>
    <recommendedName>
        <fullName evidence="1">Outer-membrane lipoprotein carrier protein</fullName>
    </recommendedName>
</protein>
<gene>
    <name evidence="1" type="primary">lolA</name>
    <name type="ordered locus">SPAB_02561</name>
</gene>
<keyword id="KW-0143">Chaperone</keyword>
<keyword id="KW-0574">Periplasm</keyword>
<keyword id="KW-0653">Protein transport</keyword>
<keyword id="KW-0732">Signal</keyword>
<keyword id="KW-0813">Transport</keyword>
<comment type="function">
    <text evidence="1">Participates in the translocation of lipoproteins from the inner membrane to the outer membrane. Only forms a complex with a lipoprotein if the residue after the N-terminal Cys is not an aspartate (The Asp acts as a targeting signal to indicate that the lipoprotein should stay in the inner membrane).</text>
</comment>
<comment type="subunit">
    <text evidence="1">Monomer.</text>
</comment>
<comment type="subcellular location">
    <subcellularLocation>
        <location evidence="1">Periplasm</location>
    </subcellularLocation>
</comment>
<comment type="similarity">
    <text evidence="1">Belongs to the LolA family.</text>
</comment>
<organism>
    <name type="scientific">Salmonella paratyphi B (strain ATCC BAA-1250 / SPB7)</name>
    <dbReference type="NCBI Taxonomy" id="1016998"/>
    <lineage>
        <taxon>Bacteria</taxon>
        <taxon>Pseudomonadati</taxon>
        <taxon>Pseudomonadota</taxon>
        <taxon>Gammaproteobacteria</taxon>
        <taxon>Enterobacterales</taxon>
        <taxon>Enterobacteriaceae</taxon>
        <taxon>Salmonella</taxon>
    </lineage>
</organism>
<reference key="1">
    <citation type="submission" date="2007-11" db="EMBL/GenBank/DDBJ databases">
        <authorList>
            <consortium name="The Salmonella enterica serovar Paratyphi B Genome Sequencing Project"/>
            <person name="McClelland M."/>
            <person name="Sanderson E.K."/>
            <person name="Porwollik S."/>
            <person name="Spieth J."/>
            <person name="Clifton W.S."/>
            <person name="Fulton R."/>
            <person name="Cordes M."/>
            <person name="Wollam A."/>
            <person name="Shah N."/>
            <person name="Pepin K."/>
            <person name="Bhonagiri V."/>
            <person name="Nash W."/>
            <person name="Johnson M."/>
            <person name="Thiruvilangam P."/>
            <person name="Wilson R."/>
        </authorList>
    </citation>
    <scope>NUCLEOTIDE SEQUENCE [LARGE SCALE GENOMIC DNA]</scope>
    <source>
        <strain>ATCC BAA-1250 / SPB7</strain>
    </source>
</reference>
<feature type="signal peptide" evidence="1">
    <location>
        <begin position="1"/>
        <end position="21"/>
    </location>
</feature>
<feature type="chain" id="PRO_1000078360" description="Outer-membrane lipoprotein carrier protein">
    <location>
        <begin position="22"/>
        <end position="203"/>
    </location>
</feature>
<feature type="region of interest" description="Disordered" evidence="2">
    <location>
        <begin position="178"/>
        <end position="203"/>
    </location>
</feature>
<dbReference type="EMBL" id="CP000886">
    <property type="protein sequence ID" value="ABX67941.1"/>
    <property type="molecule type" value="Genomic_DNA"/>
</dbReference>
<dbReference type="RefSeq" id="WP_001519746.1">
    <property type="nucleotide sequence ID" value="NC_010102.1"/>
</dbReference>
<dbReference type="SMR" id="A9N7X9"/>
<dbReference type="KEGG" id="spq:SPAB_02561"/>
<dbReference type="PATRIC" id="fig|1016998.12.peg.2424"/>
<dbReference type="HOGENOM" id="CLU_087560_1_1_6"/>
<dbReference type="Proteomes" id="UP000008556">
    <property type="component" value="Chromosome"/>
</dbReference>
<dbReference type="GO" id="GO:0030288">
    <property type="term" value="C:outer membrane-bounded periplasmic space"/>
    <property type="evidence" value="ECO:0007669"/>
    <property type="project" value="TreeGrafter"/>
</dbReference>
<dbReference type="GO" id="GO:0044874">
    <property type="term" value="P:lipoprotein localization to outer membrane"/>
    <property type="evidence" value="ECO:0007669"/>
    <property type="project" value="UniProtKB-UniRule"/>
</dbReference>
<dbReference type="GO" id="GO:0042953">
    <property type="term" value="P:lipoprotein transport"/>
    <property type="evidence" value="ECO:0007669"/>
    <property type="project" value="InterPro"/>
</dbReference>
<dbReference type="CDD" id="cd16325">
    <property type="entry name" value="LolA"/>
    <property type="match status" value="1"/>
</dbReference>
<dbReference type="FunFam" id="2.50.20.10:FF:000001">
    <property type="entry name" value="Outer-membrane lipoprotein carrier protein"/>
    <property type="match status" value="1"/>
</dbReference>
<dbReference type="Gene3D" id="2.50.20.10">
    <property type="entry name" value="Lipoprotein localisation LolA/LolB/LppX"/>
    <property type="match status" value="1"/>
</dbReference>
<dbReference type="HAMAP" id="MF_00240">
    <property type="entry name" value="LolA"/>
    <property type="match status" value="1"/>
</dbReference>
<dbReference type="InterPro" id="IPR029046">
    <property type="entry name" value="LolA/LolB/LppX"/>
</dbReference>
<dbReference type="InterPro" id="IPR004564">
    <property type="entry name" value="OM_lipoprot_carrier_LolA-like"/>
</dbReference>
<dbReference type="InterPro" id="IPR018323">
    <property type="entry name" value="OM_lipoprot_carrier_LolA_Pbac"/>
</dbReference>
<dbReference type="NCBIfam" id="TIGR00547">
    <property type="entry name" value="lolA"/>
    <property type="match status" value="1"/>
</dbReference>
<dbReference type="PANTHER" id="PTHR35869">
    <property type="entry name" value="OUTER-MEMBRANE LIPOPROTEIN CARRIER PROTEIN"/>
    <property type="match status" value="1"/>
</dbReference>
<dbReference type="PANTHER" id="PTHR35869:SF1">
    <property type="entry name" value="OUTER-MEMBRANE LIPOPROTEIN CARRIER PROTEIN"/>
    <property type="match status" value="1"/>
</dbReference>
<dbReference type="Pfam" id="PF03548">
    <property type="entry name" value="LolA"/>
    <property type="match status" value="1"/>
</dbReference>
<dbReference type="SUPFAM" id="SSF89392">
    <property type="entry name" value="Prokaryotic lipoproteins and lipoprotein localization factors"/>
    <property type="match status" value="1"/>
</dbReference>
<evidence type="ECO:0000255" key="1">
    <source>
        <dbReference type="HAMAP-Rule" id="MF_00240"/>
    </source>
</evidence>
<evidence type="ECO:0000256" key="2">
    <source>
        <dbReference type="SAM" id="MobiDB-lite"/>
    </source>
</evidence>
<accession>A9N7X9</accession>
<name>LOLA_SALPB</name>